<keyword id="KW-1015">Disulfide bond</keyword>
<keyword id="KW-0960">Knottin</keyword>
<keyword id="KW-0964">Secreted</keyword>
<keyword id="KW-0732">Signal</keyword>
<keyword id="KW-0800">Toxin</keyword>
<protein>
    <recommendedName>
        <fullName>U3-lycotoxin-Ls1a</fullName>
    </recommendedName>
    <alternativeName>
        <fullName>Toxin-like structure LSTX-B19</fullName>
    </alternativeName>
</protein>
<organism>
    <name type="scientific">Lycosa singoriensis</name>
    <name type="common">Wolf spider</name>
    <name type="synonym">Aranea singoriensis</name>
    <dbReference type="NCBI Taxonomy" id="434756"/>
    <lineage>
        <taxon>Eukaryota</taxon>
        <taxon>Metazoa</taxon>
        <taxon>Ecdysozoa</taxon>
        <taxon>Arthropoda</taxon>
        <taxon>Chelicerata</taxon>
        <taxon>Arachnida</taxon>
        <taxon>Araneae</taxon>
        <taxon>Araneomorphae</taxon>
        <taxon>Entelegynae</taxon>
        <taxon>Lycosoidea</taxon>
        <taxon>Lycosidae</taxon>
        <taxon>Lycosa</taxon>
    </lineage>
</organism>
<reference key="1">
    <citation type="journal article" date="2010" name="Zoology">
        <title>Transcriptome analysis of the venom glands of the Chinese wolf spider Lycosa singoriensis.</title>
        <authorList>
            <person name="Zhang Y."/>
            <person name="Chen J."/>
            <person name="Tang X."/>
            <person name="Wang F."/>
            <person name="Jiang L."/>
            <person name="Xiong X."/>
            <person name="Wang M."/>
            <person name="Rong M."/>
            <person name="Liu Z."/>
            <person name="Liang S."/>
        </authorList>
    </citation>
    <scope>NUCLEOTIDE SEQUENCE [LARGE SCALE MRNA]</scope>
    <source>
        <tissue>Venom gland</tissue>
    </source>
</reference>
<proteinExistence type="evidence at transcript level"/>
<name>TX319_LYCSI</name>
<feature type="signal peptide" evidence="2">
    <location>
        <begin position="1"/>
        <end position="20"/>
    </location>
</feature>
<feature type="propeptide" id="PRO_0000401643" evidence="1">
    <location>
        <begin position="21"/>
        <end position="44"/>
    </location>
</feature>
<feature type="chain" id="PRO_0000401644" description="U3-lycotoxin-Ls1a">
    <location>
        <begin position="45"/>
        <end position="115"/>
    </location>
</feature>
<feature type="disulfide bond" evidence="1">
    <location>
        <begin position="48"/>
        <end position="63"/>
    </location>
</feature>
<feature type="disulfide bond" evidence="1">
    <location>
        <begin position="55"/>
        <end position="72"/>
    </location>
</feature>
<feature type="disulfide bond" evidence="1">
    <location>
        <begin position="62"/>
        <end position="87"/>
    </location>
</feature>
<feature type="disulfide bond" evidence="1">
    <location>
        <begin position="74"/>
        <end position="85"/>
    </location>
</feature>
<accession>B6DCR4</accession>
<comment type="subcellular location">
    <subcellularLocation>
        <location evidence="1">Secreted</location>
    </subcellularLocation>
</comment>
<comment type="tissue specificity">
    <text>Expressed by the venom gland.</text>
</comment>
<comment type="domain">
    <text evidence="1">The presence of a 'disulfide through disulfide knot' structurally defines this protein as a knottin.</text>
</comment>
<comment type="similarity">
    <text evidence="3">Belongs to the neurotoxin 19 (CSTX) family. 01 subfamily.</text>
</comment>
<dbReference type="EMBL" id="EU925998">
    <property type="protein sequence ID" value="ACI41330.1"/>
    <property type="molecule type" value="mRNA"/>
</dbReference>
<dbReference type="EMBL" id="FM864002">
    <property type="protein sequence ID" value="CAS03600.1"/>
    <property type="molecule type" value="mRNA"/>
</dbReference>
<dbReference type="SMR" id="B6DCR4"/>
<dbReference type="ArachnoServer" id="AS000938">
    <property type="toxin name" value="U3-lycotoxin-Ls1a"/>
</dbReference>
<dbReference type="GO" id="GO:0005576">
    <property type="term" value="C:extracellular region"/>
    <property type="evidence" value="ECO:0007669"/>
    <property type="project" value="UniProtKB-SubCell"/>
</dbReference>
<dbReference type="GO" id="GO:0090729">
    <property type="term" value="F:toxin activity"/>
    <property type="evidence" value="ECO:0007669"/>
    <property type="project" value="UniProtKB-KW"/>
</dbReference>
<dbReference type="InterPro" id="IPR019553">
    <property type="entry name" value="Spider_toxin_CSTX_knottin"/>
</dbReference>
<dbReference type="InterPro" id="IPR011142">
    <property type="entry name" value="Spider_toxin_CSTX_Knottin_CS"/>
</dbReference>
<dbReference type="Pfam" id="PF10530">
    <property type="entry name" value="Toxin_35"/>
    <property type="match status" value="1"/>
</dbReference>
<dbReference type="PROSITE" id="PS60029">
    <property type="entry name" value="SPIDER_CSTX"/>
    <property type="match status" value="1"/>
</dbReference>
<sequence length="115" mass="13274">MKFVLLFGVFLVTLFSYSSAEMLDDFDQAAEDELLSLIEKEEARAKECTPRFYDCSHDRHSCCRSELFKDVCTCFYPEGGDNEVCTCQQPKHLKYMEKAADKAKKFGGKIKKWFG</sequence>
<evidence type="ECO:0000250" key="1"/>
<evidence type="ECO:0000255" key="2"/>
<evidence type="ECO:0000305" key="3"/>